<name>MNHG1_STAAR</name>
<feature type="chain" id="PRO_0000086859" description="Na(+)/H(+) antiporter subunit G1">
    <location>
        <begin position="1"/>
        <end position="118"/>
    </location>
</feature>
<feature type="transmembrane region" description="Helical" evidence="2">
    <location>
        <begin position="7"/>
        <end position="29"/>
    </location>
</feature>
<feature type="transmembrane region" description="Helical" evidence="2">
    <location>
        <begin position="44"/>
        <end position="66"/>
    </location>
</feature>
<feature type="transmembrane region" description="Helical" evidence="2">
    <location>
        <begin position="71"/>
        <end position="90"/>
    </location>
</feature>
<evidence type="ECO:0000250" key="1"/>
<evidence type="ECO:0000255" key="2"/>
<evidence type="ECO:0000305" key="3"/>
<gene>
    <name type="primary">mnhG1</name>
    <name type="ordered locus">SAR0908</name>
</gene>
<proteinExistence type="inferred from homology"/>
<keyword id="KW-0050">Antiport</keyword>
<keyword id="KW-1003">Cell membrane</keyword>
<keyword id="KW-0375">Hydrogen ion transport</keyword>
<keyword id="KW-0406">Ion transport</keyword>
<keyword id="KW-0472">Membrane</keyword>
<keyword id="KW-0915">Sodium</keyword>
<keyword id="KW-0739">Sodium transport</keyword>
<keyword id="KW-0812">Transmembrane</keyword>
<keyword id="KW-1133">Transmembrane helix</keyword>
<keyword id="KW-0813">Transport</keyword>
<reference key="1">
    <citation type="journal article" date="2004" name="Proc. Natl. Acad. Sci. U.S.A.">
        <title>Complete genomes of two clinical Staphylococcus aureus strains: evidence for the rapid evolution of virulence and drug resistance.</title>
        <authorList>
            <person name="Holden M.T.G."/>
            <person name="Feil E.J."/>
            <person name="Lindsay J.A."/>
            <person name="Peacock S.J."/>
            <person name="Day N.P.J."/>
            <person name="Enright M.C."/>
            <person name="Foster T.J."/>
            <person name="Moore C.E."/>
            <person name="Hurst L."/>
            <person name="Atkin R."/>
            <person name="Barron A."/>
            <person name="Bason N."/>
            <person name="Bentley S.D."/>
            <person name="Chillingworth C."/>
            <person name="Chillingworth T."/>
            <person name="Churcher C."/>
            <person name="Clark L."/>
            <person name="Corton C."/>
            <person name="Cronin A."/>
            <person name="Doggett J."/>
            <person name="Dowd L."/>
            <person name="Feltwell T."/>
            <person name="Hance Z."/>
            <person name="Harris B."/>
            <person name="Hauser H."/>
            <person name="Holroyd S."/>
            <person name="Jagels K."/>
            <person name="James K.D."/>
            <person name="Lennard N."/>
            <person name="Line A."/>
            <person name="Mayes R."/>
            <person name="Moule S."/>
            <person name="Mungall K."/>
            <person name="Ormond D."/>
            <person name="Quail M.A."/>
            <person name="Rabbinowitsch E."/>
            <person name="Rutherford K.M."/>
            <person name="Sanders M."/>
            <person name="Sharp S."/>
            <person name="Simmonds M."/>
            <person name="Stevens K."/>
            <person name="Whitehead S."/>
            <person name="Barrell B.G."/>
            <person name="Spratt B.G."/>
            <person name="Parkhill J."/>
        </authorList>
    </citation>
    <scope>NUCLEOTIDE SEQUENCE [LARGE SCALE GENOMIC DNA]</scope>
    <source>
        <strain>MRSA252</strain>
    </source>
</reference>
<organism>
    <name type="scientific">Staphylococcus aureus (strain MRSA252)</name>
    <dbReference type="NCBI Taxonomy" id="282458"/>
    <lineage>
        <taxon>Bacteria</taxon>
        <taxon>Bacillati</taxon>
        <taxon>Bacillota</taxon>
        <taxon>Bacilli</taxon>
        <taxon>Bacillales</taxon>
        <taxon>Staphylococcaceae</taxon>
        <taxon>Staphylococcus</taxon>
    </lineage>
</organism>
<dbReference type="EMBL" id="BX571856">
    <property type="protein sequence ID" value="CAG39914.1"/>
    <property type="molecule type" value="Genomic_DNA"/>
</dbReference>
<dbReference type="RefSeq" id="WP_000590451.1">
    <property type="nucleotide sequence ID" value="NC_002952.2"/>
</dbReference>
<dbReference type="SMR" id="Q6GIE2"/>
<dbReference type="GeneID" id="98345267"/>
<dbReference type="KEGG" id="sar:SAR0908"/>
<dbReference type="HOGENOM" id="CLU_121334_0_3_9"/>
<dbReference type="Proteomes" id="UP000000596">
    <property type="component" value="Chromosome"/>
</dbReference>
<dbReference type="GO" id="GO:0005886">
    <property type="term" value="C:plasma membrane"/>
    <property type="evidence" value="ECO:0007669"/>
    <property type="project" value="UniProtKB-SubCell"/>
</dbReference>
<dbReference type="GO" id="GO:0015385">
    <property type="term" value="F:sodium:proton antiporter activity"/>
    <property type="evidence" value="ECO:0007669"/>
    <property type="project" value="TreeGrafter"/>
</dbReference>
<dbReference type="InterPro" id="IPR005133">
    <property type="entry name" value="PhaG_MnhG_YufB"/>
</dbReference>
<dbReference type="NCBIfam" id="TIGR01300">
    <property type="entry name" value="CPA3_mnhG_phaG"/>
    <property type="match status" value="1"/>
</dbReference>
<dbReference type="NCBIfam" id="NF009237">
    <property type="entry name" value="PRK12587.1"/>
    <property type="match status" value="1"/>
</dbReference>
<dbReference type="NCBIfam" id="NF009314">
    <property type="entry name" value="PRK12674.1-2"/>
    <property type="match status" value="1"/>
</dbReference>
<dbReference type="PANTHER" id="PTHR34703">
    <property type="entry name" value="ANTIPORTER SUBUNIT MNHG2-RELATED"/>
    <property type="match status" value="1"/>
</dbReference>
<dbReference type="PANTHER" id="PTHR34703:SF1">
    <property type="entry name" value="ANTIPORTER SUBUNIT MNHG2-RELATED"/>
    <property type="match status" value="1"/>
</dbReference>
<dbReference type="Pfam" id="PF03334">
    <property type="entry name" value="PhaG_MnhG_YufB"/>
    <property type="match status" value="1"/>
</dbReference>
<accession>Q6GIE2</accession>
<comment type="function">
    <text evidence="1">Mnh complex is a Na(+)/H(+) antiporter involved in Na(+) excretion.</text>
</comment>
<comment type="subunit">
    <text evidence="1">May form a heterooligomeric complex that consists of seven subunits: mnhA1, mnhB1, mnhC1, mnhD1, mnhE1, mnhF1 and mnhG1.</text>
</comment>
<comment type="subcellular location">
    <subcellularLocation>
        <location evidence="3">Cell membrane</location>
        <topology evidence="3">Multi-pass membrane protein</topology>
    </subcellularLocation>
</comment>
<comment type="similarity">
    <text evidence="3">Belongs to the CPA3 antiporters (TC 2.A.63) subunit G family.</text>
</comment>
<protein>
    <recommendedName>
        <fullName>Na(+)/H(+) antiporter subunit G1</fullName>
    </recommendedName>
    <alternativeName>
        <fullName>Mnh complex subunit G1</fullName>
    </alternativeName>
</protein>
<sequence length="118" mass="12819">MIKIILISLALIFVIIGALISALAAIGLLRLEDVYSRAHAAGKASTLGAMSLLFGTFLYFIATQGFVNMQLIVAIIFVLITGPLSSHMIMKAAYNIKTPYTKKTKVDEISEDLKDTKL</sequence>